<name>MED6_PICST</name>
<evidence type="ECO:0000250" key="1"/>
<evidence type="ECO:0000256" key="2">
    <source>
        <dbReference type="SAM" id="MobiDB-lite"/>
    </source>
</evidence>
<evidence type="ECO:0000305" key="3"/>
<keyword id="KW-0010">Activator</keyword>
<keyword id="KW-0539">Nucleus</keyword>
<keyword id="KW-1185">Reference proteome</keyword>
<keyword id="KW-0804">Transcription</keyword>
<keyword id="KW-0805">Transcription regulation</keyword>
<comment type="function">
    <text evidence="1">Component of the Mediator complex, a coactivator involved in the regulated transcription of nearly all RNA polymerase II-dependent genes. Mediator functions as a bridge to convey information from gene-specific regulatory proteins to the basal RNA polymerase II transcription machinery. Mediator is recruited to promoters by direct interactions with regulatory proteins and serves as a scaffold for the assembly of a functional preinitiation complex with RNA polymerase II and the general transcription factors (By similarity).</text>
</comment>
<comment type="subunit">
    <text evidence="1">Component of the Mediator complex.</text>
</comment>
<comment type="subcellular location">
    <subcellularLocation>
        <location evidence="1">Nucleus</location>
    </subcellularLocation>
</comment>
<comment type="similarity">
    <text evidence="3">Belongs to the Mediator complex subunit 6 family.</text>
</comment>
<sequence>MSGEALDEIQWKSPEFIQERGLHTGNVLEYFSLSPFYDRTSNNQQLMMQFQFQQIQIPVNTTFQQFFQEKLREMTGVVFVIAYNREPDFWIIRKQLQLDPQNAVTLQDYYIIGANVYQAPKVYDVLSSRLLSSVLQLRNSIDLLNKMTQFHVSDGGHSYNNAIHQSTSNPTQGQSSGKSISATVGNTGTTATPMTMQTPQTVGPNGPATVQSGANSAAAISKNGSTSSAESADDRKNIYLDDIPLYGRGSTVEMLGLKVNLES</sequence>
<gene>
    <name type="primary">MED6</name>
    <name type="ORF">PICST_55363</name>
</gene>
<reference key="1">
    <citation type="journal article" date="2007" name="Nat. Biotechnol.">
        <title>Genome sequence of the lignocellulose-bioconverting and xylose-fermenting yeast Pichia stipitis.</title>
        <authorList>
            <person name="Jeffries T.W."/>
            <person name="Grigoriev I.V."/>
            <person name="Grimwood J."/>
            <person name="Laplaza J.M."/>
            <person name="Aerts A."/>
            <person name="Salamov A."/>
            <person name="Schmutz J."/>
            <person name="Lindquist E."/>
            <person name="Dehal P."/>
            <person name="Shapiro H."/>
            <person name="Jin Y.-S."/>
            <person name="Passoth V."/>
            <person name="Richardson P.M."/>
        </authorList>
    </citation>
    <scope>NUCLEOTIDE SEQUENCE [LARGE SCALE GENOMIC DNA]</scope>
    <source>
        <strain>ATCC 58785 / CBS 6054 / NBRC 10063 / NRRL Y-11545</strain>
    </source>
</reference>
<organism>
    <name type="scientific">Scheffersomyces stipitis (strain ATCC 58785 / CBS 6054 / NBRC 10063 / NRRL Y-11545)</name>
    <name type="common">Yeast</name>
    <name type="synonym">Pichia stipitis</name>
    <dbReference type="NCBI Taxonomy" id="322104"/>
    <lineage>
        <taxon>Eukaryota</taxon>
        <taxon>Fungi</taxon>
        <taxon>Dikarya</taxon>
        <taxon>Ascomycota</taxon>
        <taxon>Saccharomycotina</taxon>
        <taxon>Pichiomycetes</taxon>
        <taxon>Debaryomycetaceae</taxon>
        <taxon>Scheffersomyces</taxon>
    </lineage>
</organism>
<dbReference type="EMBL" id="CP000496">
    <property type="protein sequence ID" value="ABN64595.2"/>
    <property type="molecule type" value="Genomic_DNA"/>
</dbReference>
<dbReference type="RefSeq" id="XP_001382624.2">
    <property type="nucleotide sequence ID" value="XM_001382587.1"/>
</dbReference>
<dbReference type="SMR" id="A3LQ10"/>
<dbReference type="FunCoup" id="A3LQ10">
    <property type="interactions" value="824"/>
</dbReference>
<dbReference type="STRING" id="322104.A3LQ10"/>
<dbReference type="GeneID" id="4837647"/>
<dbReference type="KEGG" id="pic:PICST_55363"/>
<dbReference type="eggNOG" id="KOG3169">
    <property type="taxonomic scope" value="Eukaryota"/>
</dbReference>
<dbReference type="HOGENOM" id="CLU_077754_0_1_1"/>
<dbReference type="InParanoid" id="A3LQ10"/>
<dbReference type="OMA" id="MQRQFSQ"/>
<dbReference type="OrthoDB" id="344220at2759"/>
<dbReference type="Proteomes" id="UP000002258">
    <property type="component" value="Chromosome 2"/>
</dbReference>
<dbReference type="GO" id="GO:0016592">
    <property type="term" value="C:mediator complex"/>
    <property type="evidence" value="ECO:0007669"/>
    <property type="project" value="InterPro"/>
</dbReference>
<dbReference type="GO" id="GO:0003712">
    <property type="term" value="F:transcription coregulator activity"/>
    <property type="evidence" value="ECO:0007669"/>
    <property type="project" value="InterPro"/>
</dbReference>
<dbReference type="GO" id="GO:0006357">
    <property type="term" value="P:regulation of transcription by RNA polymerase II"/>
    <property type="evidence" value="ECO:0007669"/>
    <property type="project" value="InterPro"/>
</dbReference>
<dbReference type="FunFam" id="3.10.450.580:FF:000004">
    <property type="entry name" value="Mediator of RNA polymerase II transcription subunit 6"/>
    <property type="match status" value="1"/>
</dbReference>
<dbReference type="Gene3D" id="3.10.450.580">
    <property type="entry name" value="Mediator complex, subunit Med6"/>
    <property type="match status" value="1"/>
</dbReference>
<dbReference type="InterPro" id="IPR007018">
    <property type="entry name" value="Mediator_Med6"/>
</dbReference>
<dbReference type="InterPro" id="IPR016612">
    <property type="entry name" value="Mediator_Med6_fun"/>
</dbReference>
<dbReference type="InterPro" id="IPR038566">
    <property type="entry name" value="Mediator_Med6_sf"/>
</dbReference>
<dbReference type="PANTHER" id="PTHR13104">
    <property type="entry name" value="MED-6-RELATED"/>
    <property type="match status" value="1"/>
</dbReference>
<dbReference type="Pfam" id="PF04934">
    <property type="entry name" value="Med6"/>
    <property type="match status" value="1"/>
</dbReference>
<dbReference type="PIRSF" id="PIRSF013286">
    <property type="entry name" value="MED6_fungi"/>
    <property type="match status" value="1"/>
</dbReference>
<protein>
    <recommendedName>
        <fullName>Mediator of RNA polymerase II transcription subunit 6</fullName>
    </recommendedName>
    <alternativeName>
        <fullName>Mediator complex subunit 6</fullName>
    </alternativeName>
</protein>
<feature type="chain" id="PRO_0000303062" description="Mediator of RNA polymerase II transcription subunit 6">
    <location>
        <begin position="1"/>
        <end position="263"/>
    </location>
</feature>
<feature type="region of interest" description="Disordered" evidence="2">
    <location>
        <begin position="163"/>
        <end position="232"/>
    </location>
</feature>
<feature type="compositionally biased region" description="Polar residues" evidence="2">
    <location>
        <begin position="163"/>
        <end position="181"/>
    </location>
</feature>
<feature type="compositionally biased region" description="Low complexity" evidence="2">
    <location>
        <begin position="182"/>
        <end position="202"/>
    </location>
</feature>
<accession>A3LQ10</accession>
<proteinExistence type="inferred from homology"/>